<name>RAC1_RAT</name>
<dbReference type="EC" id="3.6.5.2" evidence="13"/>
<dbReference type="EMBL" id="AY491395">
    <property type="protein sequence ID" value="AAR84574.1"/>
    <property type="molecule type" value="mRNA"/>
</dbReference>
<dbReference type="RefSeq" id="NP_599193.1">
    <property type="nucleotide sequence ID" value="NM_134366.1"/>
</dbReference>
<dbReference type="BMRB" id="Q6RUV5"/>
<dbReference type="SMR" id="Q6RUV5"/>
<dbReference type="BioGRID" id="264467">
    <property type="interactions" value="9"/>
</dbReference>
<dbReference type="CORUM" id="Q6RUV5"/>
<dbReference type="DIP" id="DIP-37114N"/>
<dbReference type="FunCoup" id="Q6RUV5">
    <property type="interactions" value="3282"/>
</dbReference>
<dbReference type="IntAct" id="Q6RUV5">
    <property type="interactions" value="5"/>
</dbReference>
<dbReference type="MINT" id="Q6RUV5"/>
<dbReference type="STRING" id="10116.ENSRNOP00000001417"/>
<dbReference type="iPTMnet" id="Q6RUV5"/>
<dbReference type="PhosphoSitePlus" id="Q6RUV5"/>
<dbReference type="SwissPalm" id="Q6RUV5"/>
<dbReference type="jPOST" id="Q6RUV5"/>
<dbReference type="PaxDb" id="10116-ENSRNOP00000001417"/>
<dbReference type="GeneID" id="363875"/>
<dbReference type="KEGG" id="rno:363875"/>
<dbReference type="AGR" id="RGD:619755"/>
<dbReference type="CTD" id="5879"/>
<dbReference type="RGD" id="619755">
    <property type="gene designation" value="Rac1"/>
</dbReference>
<dbReference type="eggNOG" id="KOG0393">
    <property type="taxonomic scope" value="Eukaryota"/>
</dbReference>
<dbReference type="HOGENOM" id="CLU_041217_21_3_1"/>
<dbReference type="InParanoid" id="Q6RUV5"/>
<dbReference type="OrthoDB" id="8830751at2759"/>
<dbReference type="PhylomeDB" id="Q6RUV5"/>
<dbReference type="Reactome" id="R-RNO-114604">
    <property type="pathway name" value="GPVI-mediated activation cascade"/>
</dbReference>
<dbReference type="Reactome" id="R-RNO-1257604">
    <property type="pathway name" value="PIP3 activates AKT signaling"/>
</dbReference>
<dbReference type="Reactome" id="R-RNO-1433557">
    <property type="pathway name" value="Signaling by SCF-KIT"/>
</dbReference>
<dbReference type="Reactome" id="R-RNO-193648">
    <property type="pathway name" value="NRAGE signals death through JNK"/>
</dbReference>
<dbReference type="Reactome" id="R-RNO-2029482">
    <property type="pathway name" value="Regulation of actin dynamics for phagocytic cup formation"/>
</dbReference>
<dbReference type="Reactome" id="R-RNO-2424491">
    <property type="pathway name" value="DAP12 signaling"/>
</dbReference>
<dbReference type="Reactome" id="R-RNO-2871796">
    <property type="pathway name" value="FCERI mediated MAPK activation"/>
</dbReference>
<dbReference type="Reactome" id="R-RNO-389359">
    <property type="pathway name" value="CD28 dependent Vav1 pathway"/>
</dbReference>
<dbReference type="Reactome" id="R-RNO-3928662">
    <property type="pathway name" value="EPHB-mediated forward signaling"/>
</dbReference>
<dbReference type="Reactome" id="R-RNO-3928664">
    <property type="pathway name" value="Ephrin signaling"/>
</dbReference>
<dbReference type="Reactome" id="R-RNO-3928665">
    <property type="pathway name" value="EPH-ephrin mediated repulsion of cells"/>
</dbReference>
<dbReference type="Reactome" id="R-RNO-399954">
    <property type="pathway name" value="Sema3A PAK dependent Axon repulsion"/>
</dbReference>
<dbReference type="Reactome" id="R-RNO-4086400">
    <property type="pathway name" value="PCP/CE pathway"/>
</dbReference>
<dbReference type="Reactome" id="R-RNO-416550">
    <property type="pathway name" value="Sema4D mediated inhibition of cell attachment and migration"/>
</dbReference>
<dbReference type="Reactome" id="R-RNO-418885">
    <property type="pathway name" value="DCC mediated attractive signaling"/>
</dbReference>
<dbReference type="Reactome" id="R-RNO-4420097">
    <property type="pathway name" value="VEGFA-VEGFR2 Pathway"/>
</dbReference>
<dbReference type="Reactome" id="R-RNO-445144">
    <property type="pathway name" value="Signal transduction by L1"/>
</dbReference>
<dbReference type="Reactome" id="R-RNO-5218920">
    <property type="pathway name" value="VEGFR2 mediated vascular permeability"/>
</dbReference>
<dbReference type="Reactome" id="R-RNO-5625740">
    <property type="pathway name" value="RHO GTPases activate PKNs"/>
</dbReference>
<dbReference type="Reactome" id="R-RNO-5625900">
    <property type="pathway name" value="RHO GTPases activate CIT"/>
</dbReference>
<dbReference type="Reactome" id="R-RNO-5625970">
    <property type="pathway name" value="RHO GTPases activate KTN1"/>
</dbReference>
<dbReference type="Reactome" id="R-RNO-5626467">
    <property type="pathway name" value="RHO GTPases activate IQGAPs"/>
</dbReference>
<dbReference type="Reactome" id="R-RNO-5627123">
    <property type="pathway name" value="RHO GTPases activate PAKs"/>
</dbReference>
<dbReference type="Reactome" id="R-RNO-5663213">
    <property type="pathway name" value="RHO GTPases Activate WASPs and WAVEs"/>
</dbReference>
<dbReference type="Reactome" id="R-RNO-5663220">
    <property type="pathway name" value="RHO GTPases Activate Formins"/>
</dbReference>
<dbReference type="Reactome" id="R-RNO-5668599">
    <property type="pathway name" value="RHO GTPases Activate NADPH Oxidases"/>
</dbReference>
<dbReference type="Reactome" id="R-RNO-5687128">
    <property type="pathway name" value="MAPK6/MAPK4 signaling"/>
</dbReference>
<dbReference type="Reactome" id="R-RNO-6798695">
    <property type="pathway name" value="Neutrophil degranulation"/>
</dbReference>
<dbReference type="Reactome" id="R-RNO-6811558">
    <property type="pathway name" value="PI5P, PP2A and IER3 Regulate PI3K/AKT Signaling"/>
</dbReference>
<dbReference type="Reactome" id="R-RNO-8849471">
    <property type="pathway name" value="PTK6 Regulates RHO GTPases, RAS GTPase and MAP kinases"/>
</dbReference>
<dbReference type="Reactome" id="R-RNO-8875555">
    <property type="pathway name" value="MET activates RAP1 and RAC1"/>
</dbReference>
<dbReference type="Reactome" id="R-RNO-9013149">
    <property type="pathway name" value="RAC1 GTPase cycle"/>
</dbReference>
<dbReference type="Reactome" id="R-RNO-9032759">
    <property type="pathway name" value="NTRK2 activates RAC1"/>
</dbReference>
<dbReference type="Reactome" id="R-RNO-9748787">
    <property type="pathway name" value="Azathioprine ADME"/>
</dbReference>
<dbReference type="Reactome" id="R-RNO-983231">
    <property type="pathway name" value="Factors involved in megakaryocyte development and platelet production"/>
</dbReference>
<dbReference type="PRO" id="PR:Q6RUV5"/>
<dbReference type="Proteomes" id="UP000002494">
    <property type="component" value="Chromosome 12"/>
</dbReference>
<dbReference type="Bgee" id="ENSRNOG00000001068">
    <property type="expression patterns" value="Expressed in cerebellum and 20 other cell types or tissues"/>
</dbReference>
<dbReference type="ExpressionAtlas" id="Q6RUV5">
    <property type="expression patterns" value="baseline and differential"/>
</dbReference>
<dbReference type="GO" id="GO:0005884">
    <property type="term" value="C:actin filament"/>
    <property type="evidence" value="ECO:0000266"/>
    <property type="project" value="RGD"/>
</dbReference>
<dbReference type="GO" id="GO:0005938">
    <property type="term" value="C:cell cortex"/>
    <property type="evidence" value="ECO:0000266"/>
    <property type="project" value="RGD"/>
</dbReference>
<dbReference type="GO" id="GO:0042995">
    <property type="term" value="C:cell projection"/>
    <property type="evidence" value="ECO:0000266"/>
    <property type="project" value="RGD"/>
</dbReference>
<dbReference type="GO" id="GO:0005737">
    <property type="term" value="C:cytoplasm"/>
    <property type="evidence" value="ECO:0000266"/>
    <property type="project" value="RGD"/>
</dbReference>
<dbReference type="GO" id="GO:0036464">
    <property type="term" value="C:cytoplasmic ribonucleoprotein granule"/>
    <property type="evidence" value="ECO:0000266"/>
    <property type="project" value="RGD"/>
</dbReference>
<dbReference type="GO" id="GO:0031410">
    <property type="term" value="C:cytoplasmic vesicle"/>
    <property type="evidence" value="ECO:0000266"/>
    <property type="project" value="RGD"/>
</dbReference>
<dbReference type="GO" id="GO:0005856">
    <property type="term" value="C:cytoskeleton"/>
    <property type="evidence" value="ECO:0000318"/>
    <property type="project" value="GO_Central"/>
</dbReference>
<dbReference type="GO" id="GO:0005829">
    <property type="term" value="C:cytosol"/>
    <property type="evidence" value="ECO:0000314"/>
    <property type="project" value="UniProtKB"/>
</dbReference>
<dbReference type="GO" id="GO:0030425">
    <property type="term" value="C:dendrite"/>
    <property type="evidence" value="ECO:0007669"/>
    <property type="project" value="UniProtKB-SubCell"/>
</dbReference>
<dbReference type="GO" id="GO:0031901">
    <property type="term" value="C:early endosome membrane"/>
    <property type="evidence" value="ECO:0000266"/>
    <property type="project" value="RGD"/>
</dbReference>
<dbReference type="GO" id="GO:0098982">
    <property type="term" value="C:GABA-ergic synapse"/>
    <property type="evidence" value="ECO:0000314"/>
    <property type="project" value="SynGO"/>
</dbReference>
<dbReference type="GO" id="GO:0098978">
    <property type="term" value="C:glutamatergic synapse"/>
    <property type="evidence" value="ECO:0000266"/>
    <property type="project" value="RGD"/>
</dbReference>
<dbReference type="GO" id="GO:0000139">
    <property type="term" value="C:Golgi membrane"/>
    <property type="evidence" value="ECO:0000314"/>
    <property type="project" value="RGD"/>
</dbReference>
<dbReference type="GO" id="GO:0060091">
    <property type="term" value="C:kinocilium"/>
    <property type="evidence" value="ECO:0000266"/>
    <property type="project" value="RGD"/>
</dbReference>
<dbReference type="GO" id="GO:0030027">
    <property type="term" value="C:lamellipodium"/>
    <property type="evidence" value="ECO:0000250"/>
    <property type="project" value="UniProtKB"/>
</dbReference>
<dbReference type="GO" id="GO:0042470">
    <property type="term" value="C:melanosome"/>
    <property type="evidence" value="ECO:0007669"/>
    <property type="project" value="UniProtKB-SubCell"/>
</dbReference>
<dbReference type="GO" id="GO:0016020">
    <property type="term" value="C:membrane"/>
    <property type="evidence" value="ECO:0000314"/>
    <property type="project" value="UniProtKB"/>
</dbReference>
<dbReference type="GO" id="GO:0043020">
    <property type="term" value="C:NADPH oxidase complex"/>
    <property type="evidence" value="ECO:0000266"/>
    <property type="project" value="RGD"/>
</dbReference>
<dbReference type="GO" id="GO:0005634">
    <property type="term" value="C:nucleus"/>
    <property type="evidence" value="ECO:0000250"/>
    <property type="project" value="UniProtKB"/>
</dbReference>
<dbReference type="GO" id="GO:0000242">
    <property type="term" value="C:pericentriolar material"/>
    <property type="evidence" value="ECO:0000266"/>
    <property type="project" value="RGD"/>
</dbReference>
<dbReference type="GO" id="GO:0001891">
    <property type="term" value="C:phagocytic cup"/>
    <property type="evidence" value="ECO:0000266"/>
    <property type="project" value="RGD"/>
</dbReference>
<dbReference type="GO" id="GO:0005886">
    <property type="term" value="C:plasma membrane"/>
    <property type="evidence" value="ECO:0000266"/>
    <property type="project" value="RGD"/>
</dbReference>
<dbReference type="GO" id="GO:0098794">
    <property type="term" value="C:postsynapse"/>
    <property type="evidence" value="ECO:0000266"/>
    <property type="project" value="RGD"/>
</dbReference>
<dbReference type="GO" id="GO:0045211">
    <property type="term" value="C:postsynaptic membrane"/>
    <property type="evidence" value="ECO:0000266"/>
    <property type="project" value="RGD"/>
</dbReference>
<dbReference type="GO" id="GO:0042734">
    <property type="term" value="C:presynaptic membrane"/>
    <property type="evidence" value="ECO:0000266"/>
    <property type="project" value="RGD"/>
</dbReference>
<dbReference type="GO" id="GO:0055038">
    <property type="term" value="C:recycling endosome membrane"/>
    <property type="evidence" value="ECO:0000266"/>
    <property type="project" value="RGD"/>
</dbReference>
<dbReference type="GO" id="GO:0032587">
    <property type="term" value="C:ruffle membrane"/>
    <property type="evidence" value="ECO:0000266"/>
    <property type="project" value="RGD"/>
</dbReference>
<dbReference type="GO" id="GO:0030672">
    <property type="term" value="C:synaptic vesicle membrane"/>
    <property type="evidence" value="ECO:0000266"/>
    <property type="project" value="RGD"/>
</dbReference>
<dbReference type="GO" id="GO:0005802">
    <property type="term" value="C:trans-Golgi network"/>
    <property type="evidence" value="ECO:0000266"/>
    <property type="project" value="RGD"/>
</dbReference>
<dbReference type="GO" id="GO:0051117">
    <property type="term" value="F:ATPase binding"/>
    <property type="evidence" value="ECO:0000353"/>
    <property type="project" value="RGD"/>
</dbReference>
<dbReference type="GO" id="GO:0019899">
    <property type="term" value="F:enzyme binding"/>
    <property type="evidence" value="ECO:0000266"/>
    <property type="project" value="RGD"/>
</dbReference>
<dbReference type="GO" id="GO:0003925">
    <property type="term" value="F:G protein activity"/>
    <property type="evidence" value="ECO:0000266"/>
    <property type="project" value="RGD"/>
</dbReference>
<dbReference type="GO" id="GO:0005525">
    <property type="term" value="F:GTP binding"/>
    <property type="evidence" value="ECO:0000314"/>
    <property type="project" value="RGD"/>
</dbReference>
<dbReference type="GO" id="GO:0030742">
    <property type="term" value="F:GTP-dependent protein binding"/>
    <property type="evidence" value="ECO:0000266"/>
    <property type="project" value="RGD"/>
</dbReference>
<dbReference type="GO" id="GO:0003924">
    <property type="term" value="F:GTPase activity"/>
    <property type="evidence" value="ECO:0000314"/>
    <property type="project" value="RGD"/>
</dbReference>
<dbReference type="GO" id="GO:0042826">
    <property type="term" value="F:histone deacetylase binding"/>
    <property type="evidence" value="ECO:0000353"/>
    <property type="project" value="RGD"/>
</dbReference>
<dbReference type="GO" id="GO:0019901">
    <property type="term" value="F:protein kinase binding"/>
    <property type="evidence" value="ECO:0000353"/>
    <property type="project" value="BHF-UCL"/>
</dbReference>
<dbReference type="GO" id="GO:0044877">
    <property type="term" value="F:protein-containing complex binding"/>
    <property type="evidence" value="ECO:0000266"/>
    <property type="project" value="RGD"/>
</dbReference>
<dbReference type="GO" id="GO:0051022">
    <property type="term" value="F:Rho GDP-dissociation inhibitor binding"/>
    <property type="evidence" value="ECO:0000353"/>
    <property type="project" value="RGD"/>
</dbReference>
<dbReference type="GO" id="GO:0031267">
    <property type="term" value="F:small GTPase binding"/>
    <property type="evidence" value="ECO:0000353"/>
    <property type="project" value="RGD"/>
</dbReference>
<dbReference type="GO" id="GO:0031996">
    <property type="term" value="F:thioesterase binding"/>
    <property type="evidence" value="ECO:0000266"/>
    <property type="project" value="RGD"/>
</dbReference>
<dbReference type="GO" id="GO:0030036">
    <property type="term" value="P:actin cytoskeleton organization"/>
    <property type="evidence" value="ECO:0000314"/>
    <property type="project" value="RGD"/>
</dbReference>
<dbReference type="GO" id="GO:0007015">
    <property type="term" value="P:actin filament organization"/>
    <property type="evidence" value="ECO:0000315"/>
    <property type="project" value="RGD"/>
</dbReference>
<dbReference type="GO" id="GO:0030041">
    <property type="term" value="P:actin filament polymerization"/>
    <property type="evidence" value="ECO:0000266"/>
    <property type="project" value="RGD"/>
</dbReference>
<dbReference type="GO" id="GO:0048532">
    <property type="term" value="P:anatomical structure arrangement"/>
    <property type="evidence" value="ECO:0000266"/>
    <property type="project" value="RGD"/>
</dbReference>
<dbReference type="GO" id="GO:0086098">
    <property type="term" value="P:angiotensin-activated signaling pathway involved in heart process"/>
    <property type="evidence" value="ECO:0000266"/>
    <property type="project" value="RGD"/>
</dbReference>
<dbReference type="GO" id="GO:0002093">
    <property type="term" value="P:auditory receptor cell morphogenesis"/>
    <property type="evidence" value="ECO:0000266"/>
    <property type="project" value="RGD"/>
</dbReference>
<dbReference type="GO" id="GO:0007411">
    <property type="term" value="P:axon guidance"/>
    <property type="evidence" value="ECO:0000266"/>
    <property type="project" value="RGD"/>
</dbReference>
<dbReference type="GO" id="GO:0045453">
    <property type="term" value="P:bone resorption"/>
    <property type="evidence" value="ECO:0000314"/>
    <property type="project" value="RGD"/>
</dbReference>
<dbReference type="GO" id="GO:0007155">
    <property type="term" value="P:cell adhesion"/>
    <property type="evidence" value="ECO:0000266"/>
    <property type="project" value="RGD"/>
</dbReference>
<dbReference type="GO" id="GO:0060326">
    <property type="term" value="P:cell chemotaxis"/>
    <property type="evidence" value="ECO:0000318"/>
    <property type="project" value="GO_Central"/>
</dbReference>
<dbReference type="GO" id="GO:0016477">
    <property type="term" value="P:cell migration"/>
    <property type="evidence" value="ECO:0000266"/>
    <property type="project" value="RGD"/>
</dbReference>
<dbReference type="GO" id="GO:0048870">
    <property type="term" value="P:cell motility"/>
    <property type="evidence" value="ECO:0000250"/>
    <property type="project" value="UniProtKB"/>
</dbReference>
<dbReference type="GO" id="GO:0030031">
    <property type="term" value="P:cell projection assembly"/>
    <property type="evidence" value="ECO:0000318"/>
    <property type="project" value="GO_Central"/>
</dbReference>
<dbReference type="GO" id="GO:0045216">
    <property type="term" value="P:cell-cell junction organization"/>
    <property type="evidence" value="ECO:0000266"/>
    <property type="project" value="RGD"/>
</dbReference>
<dbReference type="GO" id="GO:0071260">
    <property type="term" value="P:cellular response to mechanical stimulus"/>
    <property type="evidence" value="ECO:0000314"/>
    <property type="project" value="RGD"/>
</dbReference>
<dbReference type="GO" id="GO:0021894">
    <property type="term" value="P:cerebral cortex GABAergic interneuron development"/>
    <property type="evidence" value="ECO:0000266"/>
    <property type="project" value="RGD"/>
</dbReference>
<dbReference type="GO" id="GO:0021799">
    <property type="term" value="P:cerebral cortex radially oriented cell migration"/>
    <property type="evidence" value="ECO:0000266"/>
    <property type="project" value="RGD"/>
</dbReference>
<dbReference type="GO" id="GO:0006935">
    <property type="term" value="P:chemotaxis"/>
    <property type="evidence" value="ECO:0000315"/>
    <property type="project" value="RGD"/>
</dbReference>
<dbReference type="GO" id="GO:0090103">
    <property type="term" value="P:cochlea morphogenesis"/>
    <property type="evidence" value="ECO:0000266"/>
    <property type="project" value="RGD"/>
</dbReference>
<dbReference type="GO" id="GO:0030865">
    <property type="term" value="P:cortical cytoskeleton organization"/>
    <property type="evidence" value="ECO:0000318"/>
    <property type="project" value="GO_Central"/>
</dbReference>
<dbReference type="GO" id="GO:0007010">
    <property type="term" value="P:cytoskeleton organization"/>
    <property type="evidence" value="ECO:0000266"/>
    <property type="project" value="RGD"/>
</dbReference>
<dbReference type="GO" id="GO:0016358">
    <property type="term" value="P:dendrite development"/>
    <property type="evidence" value="ECO:0000266"/>
    <property type="project" value="RGD"/>
</dbReference>
<dbReference type="GO" id="GO:0048813">
    <property type="term" value="P:dendrite morphogenesis"/>
    <property type="evidence" value="ECO:0000266"/>
    <property type="project" value="RGD"/>
</dbReference>
<dbReference type="GO" id="GO:0071542">
    <property type="term" value="P:dopaminergic neuron differentiation"/>
    <property type="evidence" value="ECO:0000266"/>
    <property type="project" value="RGD"/>
</dbReference>
<dbReference type="GO" id="GO:0021831">
    <property type="term" value="P:embryonic olfactory bulb interneuron precursor migration"/>
    <property type="evidence" value="ECO:0000266"/>
    <property type="project" value="RGD"/>
</dbReference>
<dbReference type="GO" id="GO:0006897">
    <property type="term" value="P:endocytosis"/>
    <property type="evidence" value="ECO:0000266"/>
    <property type="project" value="RGD"/>
</dbReference>
<dbReference type="GO" id="GO:0043652">
    <property type="term" value="P:engulfment of apoptotic cell"/>
    <property type="evidence" value="ECO:0000266"/>
    <property type="project" value="RGD"/>
</dbReference>
<dbReference type="GO" id="GO:0007167">
    <property type="term" value="P:enzyme-linked receptor protein signaling pathway"/>
    <property type="evidence" value="ECO:0000266"/>
    <property type="project" value="RGD"/>
</dbReference>
<dbReference type="GO" id="GO:0003382">
    <property type="term" value="P:epithelial cell morphogenesis"/>
    <property type="evidence" value="ECO:0000266"/>
    <property type="project" value="RGD"/>
</dbReference>
<dbReference type="GO" id="GO:0043131">
    <property type="term" value="P:erythrocyte enucleation"/>
    <property type="evidence" value="ECO:0000266"/>
    <property type="project" value="RGD"/>
</dbReference>
<dbReference type="GO" id="GO:0007163">
    <property type="term" value="P:establishment or maintenance of cell polarity"/>
    <property type="evidence" value="ECO:0000318"/>
    <property type="project" value="GO_Central"/>
</dbReference>
<dbReference type="GO" id="GO:0030900">
    <property type="term" value="P:forebrain development"/>
    <property type="evidence" value="ECO:0000266"/>
    <property type="project" value="RGD"/>
</dbReference>
<dbReference type="GO" id="GO:0007186">
    <property type="term" value="P:G protein-coupled receptor signaling pathway"/>
    <property type="evidence" value="ECO:0000266"/>
    <property type="project" value="RGD"/>
</dbReference>
<dbReference type="GO" id="GO:0048012">
    <property type="term" value="P:hepatocyte growth factor receptor signaling pathway"/>
    <property type="evidence" value="ECO:0000266"/>
    <property type="project" value="RGD"/>
</dbReference>
<dbReference type="GO" id="GO:0048873">
    <property type="term" value="P:homeostasis of number of cells within a tissue"/>
    <property type="evidence" value="ECO:0000266"/>
    <property type="project" value="RGD"/>
</dbReference>
<dbReference type="GO" id="GO:0006972">
    <property type="term" value="P:hyperosmotic response"/>
    <property type="evidence" value="ECO:0000266"/>
    <property type="project" value="RGD"/>
</dbReference>
<dbReference type="GO" id="GO:1904936">
    <property type="term" value="P:interneuron migration"/>
    <property type="evidence" value="ECO:0000266"/>
    <property type="project" value="RGD"/>
</dbReference>
<dbReference type="GO" id="GO:0030032">
    <property type="term" value="P:lamellipodium assembly"/>
    <property type="evidence" value="ECO:0000266"/>
    <property type="project" value="RGD"/>
</dbReference>
<dbReference type="GO" id="GO:0051668">
    <property type="term" value="P:localization within membrane"/>
    <property type="evidence" value="ECO:0000266"/>
    <property type="project" value="RGD"/>
</dbReference>
<dbReference type="GO" id="GO:0002551">
    <property type="term" value="P:mast cell chemotaxis"/>
    <property type="evidence" value="ECO:0000315"/>
    <property type="project" value="RGD"/>
</dbReference>
<dbReference type="GO" id="GO:1904948">
    <property type="term" value="P:midbrain dopaminergic neuron differentiation"/>
    <property type="evidence" value="ECO:0000266"/>
    <property type="project" value="RGD"/>
</dbReference>
<dbReference type="GO" id="GO:0008045">
    <property type="term" value="P:motor neuron axon guidance"/>
    <property type="evidence" value="ECO:0000318"/>
    <property type="project" value="GO_Central"/>
</dbReference>
<dbReference type="GO" id="GO:0010764">
    <property type="term" value="P:negative regulation of fibroblast migration"/>
    <property type="evidence" value="ECO:0000266"/>
    <property type="project" value="RGD"/>
</dbReference>
<dbReference type="GO" id="GO:0032707">
    <property type="term" value="P:negative regulation of interleukin-23 production"/>
    <property type="evidence" value="ECO:0000266"/>
    <property type="project" value="RGD"/>
</dbReference>
<dbReference type="GO" id="GO:0001764">
    <property type="term" value="P:neuron migration"/>
    <property type="evidence" value="ECO:0000250"/>
    <property type="project" value="UniProtKB"/>
</dbReference>
<dbReference type="GO" id="GO:0048812">
    <property type="term" value="P:neuron projection morphogenesis"/>
    <property type="evidence" value="ECO:0000266"/>
    <property type="project" value="RGD"/>
</dbReference>
<dbReference type="GO" id="GO:0035567">
    <property type="term" value="P:non-canonical Wnt signaling pathway"/>
    <property type="evidence" value="ECO:0000266"/>
    <property type="project" value="RGD"/>
</dbReference>
<dbReference type="GO" id="GO:0006911">
    <property type="term" value="P:phagocytosis, engulfment"/>
    <property type="evidence" value="ECO:0000266"/>
    <property type="project" value="RGD"/>
</dbReference>
<dbReference type="GO" id="GO:0030838">
    <property type="term" value="P:positive regulation of actin filament polymerization"/>
    <property type="evidence" value="ECO:0000266"/>
    <property type="project" value="RGD"/>
</dbReference>
<dbReference type="GO" id="GO:1903348">
    <property type="term" value="P:positive regulation of bicellular tight junction assembly"/>
    <property type="evidence" value="ECO:0000250"/>
    <property type="project" value="UniProtKB"/>
</dbReference>
<dbReference type="GO" id="GO:0010811">
    <property type="term" value="P:positive regulation of cell-substrate adhesion"/>
    <property type="evidence" value="ECO:0000266"/>
    <property type="project" value="RGD"/>
</dbReference>
<dbReference type="GO" id="GO:0060999">
    <property type="term" value="P:positive regulation of dendritic spine development"/>
    <property type="evidence" value="ECO:0000266"/>
    <property type="project" value="RGD"/>
</dbReference>
<dbReference type="GO" id="GO:0045740">
    <property type="term" value="P:positive regulation of DNA replication"/>
    <property type="evidence" value="ECO:0000315"/>
    <property type="project" value="RGD"/>
</dbReference>
<dbReference type="GO" id="GO:0010595">
    <property type="term" value="P:positive regulation of endothelial cell migration"/>
    <property type="evidence" value="ECO:0000266"/>
    <property type="project" value="RGD"/>
</dbReference>
<dbReference type="GO" id="GO:0051491">
    <property type="term" value="P:positive regulation of filopodium assembly"/>
    <property type="evidence" value="ECO:0000315"/>
    <property type="project" value="RGD"/>
</dbReference>
<dbReference type="GO" id="GO:0051894">
    <property type="term" value="P:positive regulation of focal adhesion assembly"/>
    <property type="evidence" value="ECO:0000266"/>
    <property type="project" value="RGD"/>
</dbReference>
<dbReference type="GO" id="GO:0035774">
    <property type="term" value="P:positive regulation of insulin secretion involved in cellular response to glucose stimulus"/>
    <property type="evidence" value="ECO:0000315"/>
    <property type="project" value="RGD"/>
</dbReference>
<dbReference type="GO" id="GO:0010592">
    <property type="term" value="P:positive regulation of lamellipodium assembly"/>
    <property type="evidence" value="ECO:0000315"/>
    <property type="project" value="RGD"/>
</dbReference>
<dbReference type="GO" id="GO:0031116">
    <property type="term" value="P:positive regulation of microtubule polymerization"/>
    <property type="evidence" value="ECO:0000266"/>
    <property type="project" value="RGD"/>
</dbReference>
<dbReference type="GO" id="GO:0090023">
    <property type="term" value="P:positive regulation of neutrophil chemotaxis"/>
    <property type="evidence" value="ECO:0000266"/>
    <property type="project" value="RGD"/>
</dbReference>
<dbReference type="GO" id="GO:2000386">
    <property type="term" value="P:positive regulation of ovarian follicle development"/>
    <property type="evidence" value="ECO:0000266"/>
    <property type="project" value="RGD"/>
</dbReference>
<dbReference type="GO" id="GO:0051897">
    <property type="term" value="P:positive regulation of phosphatidylinositol 3-kinase/protein kinase B signal transduction"/>
    <property type="evidence" value="ECO:0000266"/>
    <property type="project" value="RGD"/>
</dbReference>
<dbReference type="GO" id="GO:0001934">
    <property type="term" value="P:positive regulation of protein phosphorylation"/>
    <property type="evidence" value="ECO:0000250"/>
    <property type="project" value="UniProtKB"/>
</dbReference>
<dbReference type="GO" id="GO:1904395">
    <property type="term" value="P:positive regulation of skeletal muscle acetylcholine-gated channel clustering"/>
    <property type="evidence" value="ECO:0000266"/>
    <property type="project" value="RGD"/>
</dbReference>
<dbReference type="GO" id="GO:0051496">
    <property type="term" value="P:positive regulation of stress fiber assembly"/>
    <property type="evidence" value="ECO:0000266"/>
    <property type="project" value="RGD"/>
</dbReference>
<dbReference type="GO" id="GO:1900026">
    <property type="term" value="P:positive regulation of substrate adhesion-dependent cell spreading"/>
    <property type="evidence" value="ECO:0000266"/>
    <property type="project" value="RGD"/>
</dbReference>
<dbReference type="GO" id="GO:0098974">
    <property type="term" value="P:postsynaptic actin cytoskeleton organization"/>
    <property type="evidence" value="ECO:0000314"/>
    <property type="project" value="SynGO"/>
</dbReference>
<dbReference type="GO" id="GO:0072659">
    <property type="term" value="P:protein localization to plasma membrane"/>
    <property type="evidence" value="ECO:0000266"/>
    <property type="project" value="RGD"/>
</dbReference>
<dbReference type="GO" id="GO:0016601">
    <property type="term" value="P:Rac protein signal transduction"/>
    <property type="evidence" value="ECO:0000266"/>
    <property type="project" value="RGD"/>
</dbReference>
<dbReference type="GO" id="GO:0032956">
    <property type="term" value="P:regulation of actin cytoskeleton organization"/>
    <property type="evidence" value="ECO:0000318"/>
    <property type="project" value="GO_Central"/>
</dbReference>
<dbReference type="GO" id="GO:0061344">
    <property type="term" value="P:regulation of cell adhesion involved in heart morphogenesis"/>
    <property type="evidence" value="ECO:0000266"/>
    <property type="project" value="RGD"/>
</dbReference>
<dbReference type="GO" id="GO:0030334">
    <property type="term" value="P:regulation of cell migration"/>
    <property type="evidence" value="ECO:0000250"/>
    <property type="project" value="UniProtKB"/>
</dbReference>
<dbReference type="GO" id="GO:0022604">
    <property type="term" value="P:regulation of cell morphogenesis"/>
    <property type="evidence" value="ECO:0000266"/>
    <property type="project" value="RGD"/>
</dbReference>
<dbReference type="GO" id="GO:0008360">
    <property type="term" value="P:regulation of cell shape"/>
    <property type="evidence" value="ECO:0000318"/>
    <property type="project" value="GO_Central"/>
</dbReference>
<dbReference type="GO" id="GO:0008361">
    <property type="term" value="P:regulation of cell size"/>
    <property type="evidence" value="ECO:0000266"/>
    <property type="project" value="RGD"/>
</dbReference>
<dbReference type="GO" id="GO:0070376">
    <property type="term" value="P:regulation of ERK5 cascade"/>
    <property type="evidence" value="ECO:0000266"/>
    <property type="project" value="RGD"/>
</dbReference>
<dbReference type="GO" id="GO:0010762">
    <property type="term" value="P:regulation of fibroblast migration"/>
    <property type="evidence" value="ECO:0000266"/>
    <property type="project" value="RGD"/>
</dbReference>
<dbReference type="GO" id="GO:0010591">
    <property type="term" value="P:regulation of lamellipodium assembly"/>
    <property type="evidence" value="ECO:0000266"/>
    <property type="project" value="RGD"/>
</dbReference>
<dbReference type="GO" id="GO:0014041">
    <property type="term" value="P:regulation of neuron maturation"/>
    <property type="evidence" value="ECO:0000266"/>
    <property type="project" value="RGD"/>
</dbReference>
<dbReference type="GO" id="GO:2001222">
    <property type="term" value="P:regulation of neuron migration"/>
    <property type="evidence" value="ECO:0000266"/>
    <property type="project" value="RGD"/>
</dbReference>
<dbReference type="GO" id="GO:0048168">
    <property type="term" value="P:regulation of neuronal synaptic plasticity"/>
    <property type="evidence" value="ECO:0000266"/>
    <property type="project" value="RGD"/>
</dbReference>
<dbReference type="GO" id="GO:1902622">
    <property type="term" value="P:regulation of neutrophil migration"/>
    <property type="evidence" value="ECO:0000318"/>
    <property type="project" value="GO_Central"/>
</dbReference>
<dbReference type="GO" id="GO:0045428">
    <property type="term" value="P:regulation of nitric oxide biosynthetic process"/>
    <property type="evidence" value="ECO:0000316"/>
    <property type="project" value="ARUK-UCL"/>
</dbReference>
<dbReference type="GO" id="GO:0150052">
    <property type="term" value="P:regulation of postsynapse assembly"/>
    <property type="evidence" value="ECO:0000266"/>
    <property type="project" value="RGD"/>
</dbReference>
<dbReference type="GO" id="GO:0046425">
    <property type="term" value="P:regulation of receptor signaling pathway via JAK-STAT"/>
    <property type="evidence" value="ECO:0000266"/>
    <property type="project" value="RGD"/>
</dbReference>
<dbReference type="GO" id="GO:0060263">
    <property type="term" value="P:regulation of respiratory burst"/>
    <property type="evidence" value="ECO:0000266"/>
    <property type="project" value="RGD"/>
</dbReference>
<dbReference type="GO" id="GO:0051492">
    <property type="term" value="P:regulation of stress fiber assembly"/>
    <property type="evidence" value="ECO:0000266"/>
    <property type="project" value="RGD"/>
</dbReference>
<dbReference type="GO" id="GO:1900242">
    <property type="term" value="P:regulation of synaptic vesicle endocytosis"/>
    <property type="evidence" value="ECO:0000266"/>
    <property type="project" value="RGD"/>
</dbReference>
<dbReference type="GO" id="GO:0032496">
    <property type="term" value="P:response to lipopolysaccharide"/>
    <property type="evidence" value="ECO:0000266"/>
    <property type="project" value="RGD"/>
</dbReference>
<dbReference type="GO" id="GO:0097178">
    <property type="term" value="P:ruffle assembly"/>
    <property type="evidence" value="ECO:0000266"/>
    <property type="project" value="RGD"/>
</dbReference>
<dbReference type="GO" id="GO:0031529">
    <property type="term" value="P:ruffle organization"/>
    <property type="evidence" value="ECO:0000266"/>
    <property type="project" value="RGD"/>
</dbReference>
<dbReference type="GO" id="GO:0071526">
    <property type="term" value="P:semaphorin-plexin signaling pathway"/>
    <property type="evidence" value="ECO:0000315"/>
    <property type="project" value="UniProtKB"/>
</dbReference>
<dbReference type="GO" id="GO:0007264">
    <property type="term" value="P:small GTPase-mediated signal transduction"/>
    <property type="evidence" value="ECO:0000266"/>
    <property type="project" value="RGD"/>
</dbReference>
<dbReference type="GO" id="GO:0003376">
    <property type="term" value="P:sphingosine-1-phosphate receptor signaling pathway"/>
    <property type="evidence" value="ECO:0000266"/>
    <property type="project" value="RGD"/>
</dbReference>
<dbReference type="GO" id="GO:0034446">
    <property type="term" value="P:substrate adhesion-dependent cell spreading"/>
    <property type="evidence" value="ECO:0000250"/>
    <property type="project" value="UniProtKB"/>
</dbReference>
<dbReference type="GO" id="GO:0042554">
    <property type="term" value="P:superoxide anion generation"/>
    <property type="evidence" value="ECO:0000266"/>
    <property type="project" value="RGD"/>
</dbReference>
<dbReference type="GO" id="GO:0051932">
    <property type="term" value="P:synaptic transmission, GABAergic"/>
    <property type="evidence" value="ECO:0000266"/>
    <property type="project" value="RGD"/>
</dbReference>
<dbReference type="GO" id="GO:0060071">
    <property type="term" value="P:Wnt signaling pathway, planar cell polarity pathway"/>
    <property type="evidence" value="ECO:0000266"/>
    <property type="project" value="RGD"/>
</dbReference>
<dbReference type="CDD" id="cd01871">
    <property type="entry name" value="Rac1_like"/>
    <property type="match status" value="1"/>
</dbReference>
<dbReference type="FunFam" id="3.40.50.300:FF:000088">
    <property type="entry name" value="Ras-related C3 botulinum toxin substrate 1"/>
    <property type="match status" value="1"/>
</dbReference>
<dbReference type="Gene3D" id="3.40.50.300">
    <property type="entry name" value="P-loop containing nucleotide triphosphate hydrolases"/>
    <property type="match status" value="1"/>
</dbReference>
<dbReference type="InterPro" id="IPR027417">
    <property type="entry name" value="P-loop_NTPase"/>
</dbReference>
<dbReference type="InterPro" id="IPR005225">
    <property type="entry name" value="Small_GTP-bd"/>
</dbReference>
<dbReference type="InterPro" id="IPR001806">
    <property type="entry name" value="Small_GTPase"/>
</dbReference>
<dbReference type="InterPro" id="IPR003578">
    <property type="entry name" value="Small_GTPase_Rho"/>
</dbReference>
<dbReference type="NCBIfam" id="TIGR00231">
    <property type="entry name" value="small_GTP"/>
    <property type="match status" value="1"/>
</dbReference>
<dbReference type="PANTHER" id="PTHR24072">
    <property type="entry name" value="RHO FAMILY GTPASE"/>
    <property type="match status" value="1"/>
</dbReference>
<dbReference type="Pfam" id="PF00071">
    <property type="entry name" value="Ras"/>
    <property type="match status" value="1"/>
</dbReference>
<dbReference type="PRINTS" id="PR00449">
    <property type="entry name" value="RASTRNSFRMNG"/>
</dbReference>
<dbReference type="SMART" id="SM00175">
    <property type="entry name" value="RAB"/>
    <property type="match status" value="1"/>
</dbReference>
<dbReference type="SMART" id="SM00173">
    <property type="entry name" value="RAS"/>
    <property type="match status" value="1"/>
</dbReference>
<dbReference type="SMART" id="SM00174">
    <property type="entry name" value="RHO"/>
    <property type="match status" value="1"/>
</dbReference>
<dbReference type="SUPFAM" id="SSF52540">
    <property type="entry name" value="P-loop containing nucleoside triphosphate hydrolases"/>
    <property type="match status" value="1"/>
</dbReference>
<dbReference type="PROSITE" id="PS51420">
    <property type="entry name" value="RHO"/>
    <property type="match status" value="1"/>
</dbReference>
<organism>
    <name type="scientific">Rattus norvegicus</name>
    <name type="common">Rat</name>
    <dbReference type="NCBI Taxonomy" id="10116"/>
    <lineage>
        <taxon>Eukaryota</taxon>
        <taxon>Metazoa</taxon>
        <taxon>Chordata</taxon>
        <taxon>Craniata</taxon>
        <taxon>Vertebrata</taxon>
        <taxon>Euteleostomi</taxon>
        <taxon>Mammalia</taxon>
        <taxon>Eutheria</taxon>
        <taxon>Euarchontoglires</taxon>
        <taxon>Glires</taxon>
        <taxon>Rodentia</taxon>
        <taxon>Myomorpha</taxon>
        <taxon>Muroidea</taxon>
        <taxon>Muridae</taxon>
        <taxon>Murinae</taxon>
        <taxon>Rattus</taxon>
    </lineage>
</organism>
<reference key="1">
    <citation type="journal article" date="2005" name="J. Biol. Chem.">
        <title>Possible role of direct Rac1-Rab7 interaction in ruffled border formation of osteoclasts.</title>
        <authorList>
            <person name="Sun Y."/>
            <person name="Bueki K.G."/>
            <person name="Ettala O."/>
            <person name="Vaeaeraeniemi J.P."/>
            <person name="Vaeaenaenen H.K."/>
        </authorList>
    </citation>
    <scope>NUCLEOTIDE SEQUENCE [MRNA]</scope>
    <scope>FUNCTION</scope>
    <scope>SUBCELLULAR LOCATION</scope>
    <scope>TISSUE SPECIFICITY</scope>
    <scope>INTERACTION WITH RAB7A</scope>
    <source>
        <strain>Wistar</strain>
        <tissue>Bone marrow</tissue>
    </source>
</reference>
<reference key="2">
    <citation type="submission" date="2007-07" db="UniProtKB">
        <authorList>
            <person name="Lubec G."/>
            <person name="Kang S.U."/>
        </authorList>
    </citation>
    <scope>PROTEIN SEQUENCE OF 6-16; 103-116; 133-147; 154-163 AND 167-183</scope>
    <scope>IDENTIFICATION BY MASS SPECTROMETRY</scope>
    <source>
        <strain>Sprague-Dawley</strain>
        <tissue>Brain</tissue>
    </source>
</reference>
<reference key="3">
    <citation type="journal article" date="2003" name="J. Cell Biol.">
        <title>Synapse formation is regulated by the signaling adaptor GIT1.</title>
        <authorList>
            <person name="Zhang H."/>
            <person name="Webb D.J."/>
            <person name="Asmussen H."/>
            <person name="Horwitz A.F."/>
        </authorList>
    </citation>
    <scope>FUNCTION</scope>
</reference>
<reference key="4">
    <citation type="journal article" date="2005" name="J. Neurosci.">
        <title>A GIT1/PIX/Rac/PAK signaling module regulates spine morphogenesis and synapse formation through MLC.</title>
        <authorList>
            <person name="Zhang H."/>
            <person name="Webb D.J."/>
            <person name="Asmussen H."/>
            <person name="Niu S."/>
            <person name="Horwitz A.F."/>
        </authorList>
    </citation>
    <scope>SUBCELLULAR LOCATION</scope>
    <scope>MUTAGENESIS OF GLY-12</scope>
</reference>
<reference key="5">
    <citation type="journal article" date="2006" name="Proc. Natl. Acad. Sci. U.S.A.">
        <title>Rac GTPase signaling through the PP5 protein phosphatase.</title>
        <authorList>
            <person name="Gentile S."/>
            <person name="Darden T."/>
            <person name="Erxleben C."/>
            <person name="Romeo C."/>
            <person name="Russo A."/>
            <person name="Martin N."/>
            <person name="Rossie S."/>
            <person name="Armstrong D.L."/>
        </authorList>
    </citation>
    <scope>FUNCTION</scope>
    <scope>INTERACTION WITH PPP5C</scope>
    <scope>MUTAGENESIS OF GLN-61</scope>
</reference>
<reference key="6">
    <citation type="journal article" date="2008" name="Nat. Med.">
        <title>Modification of mineralocorticoid receptor function by Rac1 GTPase: implication in proteinuric kidney disease.</title>
        <authorList>
            <person name="Shibata S."/>
            <person name="Nagase M."/>
            <person name="Yoshida S."/>
            <person name="Kawarazaki W."/>
            <person name="Kurihara H."/>
            <person name="Tanaka H."/>
            <person name="Miyoshi J."/>
            <person name="Takai Y."/>
            <person name="Fujita T."/>
        </authorList>
    </citation>
    <scope>FUNCTION</scope>
    <scope>MUTAGENESIS OF GLY-12</scope>
</reference>
<reference key="7">
    <citation type="journal article" date="2010" name="J. Biol. Chem.">
        <title>Semaphorin 5A and plexin-B3 inhibit human glioma cell motility through RhoGDIalpha-mediated inactivation of Rac1 GTPase.</title>
        <authorList>
            <person name="Li X."/>
            <person name="Lee A.Y."/>
        </authorList>
    </citation>
    <scope>FUNCTION</scope>
    <scope>INTERACTION WITH PLXNB3 AND ARHGDIA</scope>
    <scope>SUBCELLULAR LOCATION</scope>
</reference>
<reference key="8">
    <citation type="journal article" date="2012" name="J. Biol. Chem.">
        <title>Sh3rf2/POSHER protein promotes cell survival by RING-mediated proteasomal degradation of the c-Jun N-terminal kinase scaffold POSH (Plenty of SH3s) protein.</title>
        <authorList>
            <person name="Wilhelm M."/>
            <person name="Kukekov N.V."/>
            <person name="Schmit T.L."/>
            <person name="Biagas K.V."/>
            <person name="Sproul A.A."/>
            <person name="Gire S."/>
            <person name="Maes M.E."/>
            <person name="Xu Z."/>
            <person name="Greene L.A."/>
        </authorList>
    </citation>
    <scope>INTERACTION WITH SH3RF2</scope>
</reference>
<reference key="9">
    <citation type="journal article" date="2013" name="J. Neurosci.">
        <title>Shank3 deficiency induces NMDA receptor hypofunction via an actin-dependent mechanism.</title>
        <authorList>
            <person name="Duffney L.J."/>
            <person name="Wei J."/>
            <person name="Cheng J."/>
            <person name="Liu W."/>
            <person name="Smith K.R."/>
            <person name="Kittler J.T."/>
            <person name="Yan Z."/>
        </authorList>
    </citation>
    <scope>FUNCTION IN ACTIN POLYMERIZATION</scope>
    <scope>MUTAGENESIS OF THR-17 AND GLN-61</scope>
</reference>
<reference key="10">
    <citation type="journal article" date="2014" name="Cell Rep.">
        <title>GIT1 and betaPIX are essential for GABA(A) receptor synaptic stability and inhibitory neurotransmission.</title>
        <authorList>
            <person name="Smith K.R."/>
            <person name="Davenport E.C."/>
            <person name="Wei J."/>
            <person name="Li X."/>
            <person name="Pathania M."/>
            <person name="Vaccaro V."/>
            <person name="Yan Z."/>
            <person name="Kittler J.T."/>
        </authorList>
    </citation>
    <scope>FUNCTION</scope>
</reference>
<reference key="11">
    <citation type="journal article" date="2014" name="Elife">
        <title>Dynamic recruitment of the curvature-sensitive protein ArhGAP44 to nanoscale membrane deformations limits exploratory filopodia initiation in neurons.</title>
        <authorList>
            <person name="Galic M."/>
            <person name="Tsai F.C."/>
            <person name="Collins S.R."/>
            <person name="Matis M."/>
            <person name="Bandara S."/>
            <person name="Meyer T."/>
        </authorList>
    </citation>
    <scope>FUNCTION</scope>
    <scope>CATALYTIC ACTIVITY</scope>
    <scope>ACTIVITY REGULATION</scope>
</reference>
<sequence length="192" mass="21450">MQAIKCVVVGDGAVGKTCLLISYTTNAFPGEYIPTVFDNYSANVMVDGKPVNLGLWDTAGQEDYDRLRPLSYPQTDVFLICFSLVSPASFENVRAKWYPEVRHHCPNTPIILVGTKLDLRDDKDTIEKLKEKKLTPITYPQGLAMAKEIGAVKYLECSALTQRGLKTVFDEAIRAVLCPPPVKKRKRKCLLL</sequence>
<keyword id="KW-1003">Cell membrane</keyword>
<keyword id="KW-0966">Cell projection</keyword>
<keyword id="KW-0963">Cytoplasm</keyword>
<keyword id="KW-0903">Direct protein sequencing</keyword>
<keyword id="KW-0342">GTP-binding</keyword>
<keyword id="KW-0378">Hydrolase</keyword>
<keyword id="KW-1017">Isopeptide bond</keyword>
<keyword id="KW-0449">Lipoprotein</keyword>
<keyword id="KW-0472">Membrane</keyword>
<keyword id="KW-0488">Methylation</keyword>
<keyword id="KW-0547">Nucleotide-binding</keyword>
<keyword id="KW-0539">Nucleus</keyword>
<keyword id="KW-0597">Phosphoprotein</keyword>
<keyword id="KW-0636">Prenylation</keyword>
<keyword id="KW-1185">Reference proteome</keyword>
<keyword id="KW-0770">Synapse</keyword>
<keyword id="KW-0832">Ubl conjugation</keyword>
<proteinExistence type="evidence at protein level"/>
<feature type="chain" id="PRO_0000042040" description="Ras-related C3 botulinum toxin substrate 1">
    <location>
        <begin position="1"/>
        <end position="189"/>
    </location>
</feature>
<feature type="propeptide" id="PRO_0000042041" description="Removed in mature form" evidence="1">
    <location>
        <begin position="190"/>
        <end position="192"/>
    </location>
</feature>
<feature type="short sequence motif" description="Effector region" evidence="3">
    <location>
        <begin position="32"/>
        <end position="40"/>
    </location>
</feature>
<feature type="short sequence motif" description="Polybasic region; required for nuclear import" evidence="1">
    <location>
        <begin position="179"/>
        <end position="188"/>
    </location>
</feature>
<feature type="binding site" evidence="1">
    <location>
        <position position="12"/>
    </location>
    <ligand>
        <name>GTP</name>
        <dbReference type="ChEBI" id="CHEBI:37565"/>
    </ligand>
</feature>
<feature type="binding site" evidence="1">
    <location>
        <position position="13"/>
    </location>
    <ligand>
        <name>GTP</name>
        <dbReference type="ChEBI" id="CHEBI:37565"/>
    </ligand>
</feature>
<feature type="binding site" evidence="1">
    <location>
        <position position="14"/>
    </location>
    <ligand>
        <name>GTP</name>
        <dbReference type="ChEBI" id="CHEBI:37565"/>
    </ligand>
</feature>
<feature type="binding site" evidence="1">
    <location>
        <position position="15"/>
    </location>
    <ligand>
        <name>GTP</name>
        <dbReference type="ChEBI" id="CHEBI:37565"/>
    </ligand>
</feature>
<feature type="binding site" evidence="1">
    <location>
        <position position="16"/>
    </location>
    <ligand>
        <name>GTP</name>
        <dbReference type="ChEBI" id="CHEBI:37565"/>
    </ligand>
</feature>
<feature type="binding site" evidence="1">
    <location>
        <position position="17"/>
    </location>
    <ligand>
        <name>GTP</name>
        <dbReference type="ChEBI" id="CHEBI:37565"/>
    </ligand>
</feature>
<feature type="binding site" evidence="1">
    <location>
        <position position="18"/>
    </location>
    <ligand>
        <name>GTP</name>
        <dbReference type="ChEBI" id="CHEBI:37565"/>
    </ligand>
</feature>
<feature type="binding site" evidence="1">
    <location>
        <position position="31"/>
    </location>
    <ligand>
        <name>GTP</name>
        <dbReference type="ChEBI" id="CHEBI:37565"/>
    </ligand>
</feature>
<feature type="binding site" evidence="1">
    <location>
        <position position="32"/>
    </location>
    <ligand>
        <name>GTP</name>
        <dbReference type="ChEBI" id="CHEBI:37565"/>
    </ligand>
</feature>
<feature type="binding site" evidence="1">
    <location>
        <position position="34"/>
    </location>
    <ligand>
        <name>GTP</name>
        <dbReference type="ChEBI" id="CHEBI:37565"/>
    </ligand>
</feature>
<feature type="binding site" evidence="1">
    <location>
        <position position="35"/>
    </location>
    <ligand>
        <name>GTP</name>
        <dbReference type="ChEBI" id="CHEBI:37565"/>
    </ligand>
</feature>
<feature type="binding site" evidence="1">
    <location>
        <position position="59"/>
    </location>
    <ligand>
        <name>GTP</name>
        <dbReference type="ChEBI" id="CHEBI:37565"/>
    </ligand>
</feature>
<feature type="binding site" evidence="1">
    <location>
        <position position="60"/>
    </location>
    <ligand>
        <name>GTP</name>
        <dbReference type="ChEBI" id="CHEBI:37565"/>
    </ligand>
</feature>
<feature type="binding site" evidence="1">
    <location>
        <position position="116"/>
    </location>
    <ligand>
        <name>GTP</name>
        <dbReference type="ChEBI" id="CHEBI:37565"/>
    </ligand>
</feature>
<feature type="binding site" evidence="1">
    <location>
        <position position="118"/>
    </location>
    <ligand>
        <name>GTP</name>
        <dbReference type="ChEBI" id="CHEBI:37565"/>
    </ligand>
</feature>
<feature type="binding site" evidence="1">
    <location>
        <position position="119"/>
    </location>
    <ligand>
        <name>GTP</name>
        <dbReference type="ChEBI" id="CHEBI:37565"/>
    </ligand>
</feature>
<feature type="binding site" evidence="1">
    <location>
        <position position="159"/>
    </location>
    <ligand>
        <name>GTP</name>
        <dbReference type="ChEBI" id="CHEBI:37565"/>
    </ligand>
</feature>
<feature type="binding site" evidence="1">
    <location>
        <position position="160"/>
    </location>
    <ligand>
        <name>GTP</name>
        <dbReference type="ChEBI" id="CHEBI:37565"/>
    </ligand>
</feature>
<feature type="modified residue" description="Phosphoserine" evidence="1">
    <location>
        <position position="71"/>
    </location>
</feature>
<feature type="modified residue" description="Cysteine methyl ester" evidence="1">
    <location>
        <position position="189"/>
    </location>
</feature>
<feature type="lipid moiety-binding region" description="S-geranylgeranyl cysteine" evidence="1">
    <location>
        <position position="189"/>
    </location>
</feature>
<feature type="cross-link" description="Glycyl lysine isopeptide (Lys-Gly) (interchain with G-Cter in ubiquitin)" evidence="1">
    <location>
        <position position="147"/>
    </location>
</feature>
<feature type="cross-link" description="Glycyl lysine isopeptide (Lys-Gly) (interchain with G-Cter in ubiquitin)" evidence="1">
    <location>
        <position position="166"/>
    </location>
</feature>
<feature type="mutagenesis site" description="Constitutively active. Increases PAK1 and LIMK1 phosphorylation and NR3C2 nuclear localization in podocytes. In hippocampal neurons, increases the amount of dendritic protrusions and decreases the number of normal spines and synapses." evidence="5 8">
    <original>G</original>
    <variation>V</variation>
    <location>
        <position position="12"/>
    </location>
</feature>
<feature type="mutagenesis site" description="Dominant negative. Reduces NMDA receptor-mediated synaptic currents." evidence="11">
    <original>T</original>
    <variation>N</variation>
    <location>
        <position position="17"/>
    </location>
</feature>
<feature type="mutagenesis site" description="Constitutively active. Interacts with PPP5C." evidence="7 11">
    <original>Q</original>
    <variation>L</variation>
    <location>
        <position position="61"/>
    </location>
</feature>
<accession>Q6RUV5</accession>
<evidence type="ECO:0000250" key="1">
    <source>
        <dbReference type="UniProtKB" id="P63000"/>
    </source>
</evidence>
<evidence type="ECO:0000250" key="2">
    <source>
        <dbReference type="UniProtKB" id="P63001"/>
    </source>
</evidence>
<evidence type="ECO:0000255" key="3"/>
<evidence type="ECO:0000269" key="4">
    <source>
    </source>
</evidence>
<evidence type="ECO:0000269" key="5">
    <source>
    </source>
</evidence>
<evidence type="ECO:0000269" key="6">
    <source>
    </source>
</evidence>
<evidence type="ECO:0000269" key="7">
    <source>
    </source>
</evidence>
<evidence type="ECO:0000269" key="8">
    <source>
    </source>
</evidence>
<evidence type="ECO:0000269" key="9">
    <source>
    </source>
</evidence>
<evidence type="ECO:0000269" key="10">
    <source>
    </source>
</evidence>
<evidence type="ECO:0000269" key="11">
    <source>
    </source>
</evidence>
<evidence type="ECO:0000269" key="12">
    <source>
    </source>
</evidence>
<evidence type="ECO:0000269" key="13">
    <source>
    </source>
</evidence>
<evidence type="ECO:0000303" key="14">
    <source>
    </source>
</evidence>
<evidence type="ECO:0000305" key="15"/>
<evidence type="ECO:0000305" key="16">
    <source>
    </source>
</evidence>
<evidence type="ECO:0000312" key="17">
    <source>
        <dbReference type="RGD" id="619755"/>
    </source>
</evidence>
<protein>
    <recommendedName>
        <fullName evidence="15">Ras-related C3 botulinum toxin substrate 1</fullName>
        <ecNumber evidence="13">3.6.5.2</ecNumber>
    </recommendedName>
    <alternativeName>
        <fullName>p21-Rac1</fullName>
    </alternativeName>
</protein>
<gene>
    <name evidence="17" type="primary">Rac1</name>
    <name evidence="14" type="synonym">Rac</name>
</gene>
<comment type="function">
    <text evidence="1 2 4 6 7 8 9 11 12 13">Plasma membrane-associated small GTPase which cycles between active GTP-bound and inactive GDP-bound states. In its active state, binds to a variety of effector proteins to regulate cellular responses such as secretory processes, phagocytosis of apoptotic cells, epithelial cell polarization, neurons adhesion, migration and differentiation, and growth-factor induced formation of membrane ruffles (PubMed:16040606, PubMed:16549782). Rac1 p21/rho GDI heterodimer is the active component of the cytosolic factor sigma 1, which is involved in stimulation of the NADPH oxidase activity in macrophages. Essential for the SPATA13-mediated regulation of cell migration and adhesion assembly and disassembly. Stimulates PKN2 kinase activity (By similarity). In concert with RAB7A, plays a role in regulating the formation of RBs (ruffled borders) in osteoclasts (PubMed:16040606). In glioma cells, promotes cell migration and invasion (PubMed:20696765). In podocytes, promotes nuclear shuttling of NR3C2; this modulation is required for a proper kidney functioning (PubMed:19029984). Required for atypical chemokine receptor ACKR2-induced LIMK1-PAK1-dependent phosphorylation of cofilin (CFL1) and for up-regulation of ACKR2 from endosomal compartment to cell membrane, increasing its efficiency in chemokine uptake and degradation (By similarity). In neurons, is involved in dendritic spine formation and synaptic plasticity (PubMed:25498153). In hippocampal neurons, involved in spine morphogenesis and synapse formation, through local activation at synapses by guanine nucleotide exchange factors (GEFs), such as ARHGEF6/ARHGEF7/PIX (PubMed:12695502). In synapses, may mediate the regulation of F-actin cluster formation performed by SHANK3 (PubMed:24089484). In neurons, plays a crucial role in regulating GABA(A) receptor synaptic stability and hence GABAergic inhibitory synaptic transmission through its role in PAK1 activation and eventually F-actin stabilization (PubMed:25284783). Required for DSG3 translocation to cell-cell junctions, DSG3-mediated organization of cortical F-actin bundles and anchoring of actin at cell junctions; via interaction with DSG3 (By similarity). Subunit of the phagocyte NADPH oxidase complex that mediates the transfer of electrons from cytosolic NADPH to O2 to produce the superoxide anion (O2(-)) (By similarity).</text>
</comment>
<comment type="catalytic activity">
    <reaction evidence="13">
        <text>GTP + H2O = GDP + phosphate + H(+)</text>
        <dbReference type="Rhea" id="RHEA:19669"/>
        <dbReference type="ChEBI" id="CHEBI:15377"/>
        <dbReference type="ChEBI" id="CHEBI:15378"/>
        <dbReference type="ChEBI" id="CHEBI:37565"/>
        <dbReference type="ChEBI" id="CHEBI:43474"/>
        <dbReference type="ChEBI" id="CHEBI:58189"/>
        <dbReference type="EC" id="3.6.5.2"/>
    </reaction>
    <physiologicalReaction direction="left-to-right" evidence="16">
        <dbReference type="Rhea" id="RHEA:19670"/>
    </physiologicalReaction>
</comment>
<comment type="activity regulation">
    <text evidence="13">Regulated by guanine nucleotide exchange factors (GEFs) which promote the exchange of bound GDP for free GTP, GTPase activating proteins (GAPs) which increase the GTP hydrolysis activity, and GDP dissociation inhibitors which inhibit the dissociation of the nucleotide from the GTPase. GTP hydrolysis is stimulated by ARHGAP30 and ARHGAP44.</text>
</comment>
<comment type="subunit">
    <text evidence="1 2 6 7 9 10">Interacts with NISCH. Interacts with PIP5K1A. Interacts with the GTP-bound form of RAB7A. Interacts with SRGAP2. Interacts with CYFIP1/SRA-1. Interacts with PLXNB3. Interacts with ARHGDIA; the interaction is induced by SEMA5A, mediated through PLXNB3 and inactivates and stabilizes RAC1. Interacts (GTP-bound form preferentially) with PKN2 (via the REM repeats); the interaction stimulates autophosphorylation and phosphorylation of PKN2. Interacts with the GEF proteins PREX1, RASGRF2, FARP1, FARP2, DOCK1, DOCK2 and DOCK7, which promote the exchange between GDP and GTP, and therefore activate it. Interacts with PARD6A, PARD6B and PARD6G in a GTP-dependent manner. Part of a quaternary complex containing PARD3, some PARD6 protein (PARD6A, PARD6B or PARD6G) and some atypical PKC protein (PRKCI or PRKCZ), which plays a central role in epithelial cell polarization. Found in a trimeric complex composed of DOCK1 and ELMO1, which plays a central role in phagocytosis of apoptotic cells. Interacts with RALBP1 via its effector domain. Interacts with PLXNB1. Part of a complex with MAP2K3, MAP3K3, CCM2 and DEF6. Interacts with BAIAP2, BAIAP2L1 and DEF6. Interacts with Y.pseudotuberculosis YPKA and PLCB2. Interacts with NOXA1. Interacts with ARHGEF2. Interacts with TBC1D2. Interacts with UNKL. Interacts with USP6. Interacts with SPATA13. Interacts with ARHGEF16; mediates activation of RAC1 by EPHA2. Interacts with ITGB4. Interacts with S100A8 and calprotectin (S100A8/9). Interacts with PACSIN2. Interacts with ITGB1BP1. Interacts (when active) with PPP5C (via TPR repeats); activates PPP5C phosphatase activity and translocates PPP5C to the cell membrane. Interacts with RAPH1 (via Ras associating and PH domains) (By similarity). Interacts with MTSS2 (via IMD domain); this interaction may be important to potentiate PDGF-induced RAC1 activation. Interacts with PAK2. Interacts (GTP-bound form) with SH3RF1 and SH3RF3. Found in a complex with SH3RF1, MAPK8IP1/JIP1, MAP3K11/MLK3, MAP2K7/MKK7 and MAPK8/JNK1 (By similarity). Interacts (both active GTP- or inactive GDP-bound forms) with SH3RF2 (PubMed:22128169). Interacts (GTP-bound form preferentially) with CYRIB (By similarity). Interacts with DOCK4 (via DOCKER domain); functions as a guanine nucleotide exchange factor (GEF) for RAC1 (By similarity). Interacts with GARRE1 (By similarity). Interacts with RAP1GDS1 (By similarity). Interacts with TNFAIP8L2 (By similarity). May interact with ARHGAP36 (By similarity). Interacts with CD151 and ITGB1 (By similarity). Interacts with DSG3; the interaction is required for DSG3 translocation to cell-cell junctions, organization of cortical F-actin bundles and actin anchoring at cell-cell junctions (By similarity). Component of the phagocyte NADPH oxidase complex composed of an obligatory core heterodimer formed by the membrane proteins CYBA and CYBB and the cytosolic regulatory subunits NCF1/p47-phox, NCF2/p67-phox, NCF4/p40-phox and the small GTPase RAC1 or RAC2. Interacts with NCF2 (By similarity).</text>
</comment>
<comment type="subcellular location">
    <subcellularLocation>
        <location evidence="6">Cell membrane</location>
        <topology evidence="6">Lipid-anchor</topology>
        <orientation evidence="6">Cytoplasmic side</orientation>
    </subcellularLocation>
    <subcellularLocation>
        <location evidence="1">Melanosome</location>
    </subcellularLocation>
    <subcellularLocation>
        <location evidence="1 2">Cytoplasm</location>
    </subcellularLocation>
    <subcellularLocation>
        <location evidence="2">Cell projection</location>
        <location evidence="2">Lamellipodium</location>
    </subcellularLocation>
    <subcellularLocation>
        <location evidence="2">Cell projection</location>
        <location evidence="2">Dendrite</location>
    </subcellularLocation>
    <subcellularLocation>
        <location evidence="5">Synapse</location>
    </subcellularLocation>
    <subcellularLocation>
        <location evidence="1">Nucleus</location>
    </subcellularLocation>
    <text evidence="1 2 5">Inner surface of plasma membrane possibly with attachment requiring prenylation of the C-terminal cysteine (By similarity). Found in the ruffled border (a late endosomal-like compartment in the plasma membrane) of bone-resorbing osteoclasts. Localizes to the lamellipodium in a SH3RF1-dependent manner. In macrophages, cytoplasmic location increases upon CSF1 stimulation (By similarity). In hippocampal neurons, localizes at synapses, where it is activated (PubMed:15800193). Activation by GTP-binding promotes nuclear localization (By similarity).</text>
</comment>
<comment type="tissue specificity">
    <text evidence="6">Osteoclasts.</text>
</comment>
<comment type="domain">
    <text evidence="1">The effector region mediates interaction with DEF6.</text>
</comment>
<comment type="PTM">
    <text evidence="1">GTP-bound active form is ubiquitinated at Lys-147 by HACE1, leading to its degradation by the proteasome.</text>
</comment>
<comment type="PTM">
    <text evidence="1">Phosphorylated by AKT at Ser-71.</text>
</comment>
<comment type="PTM">
    <text evidence="1">Ubiquitinated at Lys-166 in a FBXL19-mediated manner; leading to proteasomal degradation.</text>
</comment>
<comment type="similarity">
    <text evidence="15">Belongs to the small GTPase superfamily. Rho family.</text>
</comment>